<keyword id="KW-0175">Coiled coil</keyword>
<keyword id="KW-0217">Developmental protein</keyword>
<keyword id="KW-0539">Nucleus</keyword>
<keyword id="KW-0804">Transcription</keyword>
<keyword id="KW-0805">Transcription regulation</keyword>
<reference key="1">
    <citation type="journal article" date="2005" name="Proc. Natl. Acad. Sci. U.S.A.">
        <title>Shoot circumnutation and winding movements require gravisensing cells.</title>
        <authorList>
            <person name="Kitazawa D."/>
            <person name="Hatakeda Y."/>
            <person name="Kamada M."/>
            <person name="Fujii N."/>
            <person name="Miyazawa Y."/>
            <person name="Hoshino A."/>
            <person name="Iida S."/>
            <person name="Fukaki H."/>
            <person name="Morita M.T."/>
            <person name="Tasaka M."/>
            <person name="Suge H."/>
            <person name="Takahashi H."/>
        </authorList>
    </citation>
    <scope>NUCLEOTIDE SEQUENCE [MRNA]</scope>
    <scope>FUNCTION</scope>
    <scope>MUTAGENESIS OF GLU-523</scope>
    <source>
        <strain>cv. Violet</strain>
    </source>
</reference>
<comment type="function">
    <text evidence="1 5">Putative transcription factor involved in asymmetric cell division (By similarity). Required for differentiation of endodermis and graviresponses.</text>
</comment>
<comment type="subcellular location">
    <subcellularLocation>
        <location evidence="1">Nucleus</location>
    </subcellularLocation>
</comment>
<comment type="similarity">
    <text evidence="6">Belongs to the GRAS family.</text>
</comment>
<name>SCR_IPONI</name>
<dbReference type="EMBL" id="AB200391">
    <property type="protein sequence ID" value="BAE48702.1"/>
    <property type="molecule type" value="mRNA"/>
</dbReference>
<dbReference type="SMR" id="Q2Z2E9"/>
<dbReference type="GO" id="GO:0005634">
    <property type="term" value="C:nucleus"/>
    <property type="evidence" value="ECO:0007669"/>
    <property type="project" value="UniProtKB-SubCell"/>
</dbReference>
<dbReference type="InterPro" id="IPR005202">
    <property type="entry name" value="TF_GRAS"/>
</dbReference>
<dbReference type="PANTHER" id="PTHR31636">
    <property type="entry name" value="OSJNBA0084A10.13 PROTEIN-RELATED"/>
    <property type="match status" value="1"/>
</dbReference>
<dbReference type="Pfam" id="PF03514">
    <property type="entry name" value="GRAS"/>
    <property type="match status" value="1"/>
</dbReference>
<dbReference type="PROSITE" id="PS50985">
    <property type="entry name" value="GRAS"/>
    <property type="match status" value="1"/>
</dbReference>
<proteinExistence type="evidence at protein level"/>
<evidence type="ECO:0000250" key="1"/>
<evidence type="ECO:0000255" key="2"/>
<evidence type="ECO:0000255" key="3">
    <source>
        <dbReference type="PROSITE-ProRule" id="PRU01191"/>
    </source>
</evidence>
<evidence type="ECO:0000256" key="4">
    <source>
        <dbReference type="SAM" id="MobiDB-lite"/>
    </source>
</evidence>
<evidence type="ECO:0000269" key="5">
    <source>
    </source>
</evidence>
<evidence type="ECO:0000305" key="6"/>
<organism>
    <name type="scientific">Ipomoea nil</name>
    <name type="common">Japanese morning glory</name>
    <name type="synonym">Pharbitis nil</name>
    <dbReference type="NCBI Taxonomy" id="35883"/>
    <lineage>
        <taxon>Eukaryota</taxon>
        <taxon>Viridiplantae</taxon>
        <taxon>Streptophyta</taxon>
        <taxon>Embryophyta</taxon>
        <taxon>Tracheophyta</taxon>
        <taxon>Spermatophyta</taxon>
        <taxon>Magnoliopsida</taxon>
        <taxon>eudicotyledons</taxon>
        <taxon>Gunneridae</taxon>
        <taxon>Pentapetalae</taxon>
        <taxon>asterids</taxon>
        <taxon>lamiids</taxon>
        <taxon>Solanales</taxon>
        <taxon>Convolvulaceae</taxon>
        <taxon>Ipomoeeae</taxon>
        <taxon>Ipomoea</taxon>
    </lineage>
</organism>
<sequence>MAAKAFPMVGDAANVSGGATSSREYHLNDSHHNILPLHSSSSSASPSSHLALLCDNAKMVRKRAASEMELQIGGGISEHGRFLRRNAPLLGDLRVCGTNFGGGAGGDNGGGNSLGVSVSHPNHVVVNNYSTMQIAPPPTSTNLSVTSTSDATHLAYMEQLPPNEPQAPLPLCVFSGLPLFPAPSRARNAAGAALQPAPLPVTASGSAIGVNSSSGGGMGDNGTAMAWIDGIIKDLIHISTHVSIPQLIQNVREIIHPCNPNLAALLEYRLRSLTTAAAAADPLAANVYDDWRRKETLQPQSQDAITHPLHLPDSMTPPPWEITLPPAAAAATTRHQLRDNNPSSLPFVPVPSSDRLDQQQQPGRMDNEKQPESQSQSQSPPASENTAAAALIRTESIMRREKEELEQQKKDEEGLHLLTLLLQCAEAVAADNLDEANRMLLQVSELSTPYGTSAQRVAAYFSEAMSARLVNSCLGIYASAPLNALPLSLNQKMASAFQVFNGISPFVKFSHFTANQAIQEAFEREDRVHIIDLDIMQGLQWPGLFHILASRPGGPPLVRLTGLGTSMEALEATGKRLSDFAQKLGLPFEFFPVADKVGNLDPQRLNVNKREAVAVHWLQHSLYDVTGSDTNTLWLLQRLAPKVVTVVEQDLSHAGSFLGRFVEAIHYYSALFDSLGACYGEESEERHAVEQQLLSREIRNVLAVGGPSRSGEVKFNNWREKFQQSGFRGVSLAGNAAAQATLLLGMFHSDGYTLAEDNGALKLGWKDLCLLTASAWRPPPLAQ</sequence>
<accession>Q2Z2E9</accession>
<protein>
    <recommendedName>
        <fullName>Protein SCARECROW</fullName>
        <shortName>PnSCR</shortName>
    </recommendedName>
</protein>
<gene>
    <name type="primary">SCR</name>
</gene>
<feature type="chain" id="PRO_0000329416" description="Protein SCARECROW">
    <location>
        <begin position="1"/>
        <end position="783"/>
    </location>
</feature>
<feature type="domain" description="GRAS" evidence="3">
    <location>
        <begin position="408"/>
        <end position="777"/>
    </location>
</feature>
<feature type="region of interest" description="Disordered" evidence="4">
    <location>
        <begin position="298"/>
        <end position="387"/>
    </location>
</feature>
<feature type="region of interest" description="Leucine repeat I (LRI)" evidence="3">
    <location>
        <begin position="415"/>
        <end position="478"/>
    </location>
</feature>
<feature type="region of interest" description="VHIID" evidence="3">
    <location>
        <begin position="497"/>
        <end position="562"/>
    </location>
</feature>
<feature type="region of interest" description="Leucine repeat II (LRII)" evidence="3">
    <location>
        <begin position="572"/>
        <end position="604"/>
    </location>
</feature>
<feature type="region of interest" description="PFYRE" evidence="3">
    <location>
        <begin position="613"/>
        <end position="700"/>
    </location>
</feature>
<feature type="region of interest" description="SAW" evidence="3">
    <location>
        <begin position="703"/>
        <end position="777"/>
    </location>
</feature>
<feature type="coiled-coil region" evidence="2">
    <location>
        <begin position="387"/>
        <end position="418"/>
    </location>
</feature>
<feature type="short sequence motif" description="LxCxE motif" evidence="3">
    <location>
        <begin position="422"/>
        <end position="426"/>
    </location>
</feature>
<feature type="short sequence motif" description="VHIID" evidence="3">
    <location>
        <begin position="528"/>
        <end position="532"/>
    </location>
</feature>
<feature type="compositionally biased region" description="Low complexity" evidence="4">
    <location>
        <begin position="342"/>
        <end position="353"/>
    </location>
</feature>
<feature type="compositionally biased region" description="Low complexity" evidence="4">
    <location>
        <begin position="372"/>
        <end position="384"/>
    </location>
</feature>
<feature type="mutagenesis site" description="In weeping; loss of gravitropism, circumnutation and winding movements." evidence="5">
    <original>E</original>
    <variation>EI</variation>
    <location>
        <position position="523"/>
    </location>
</feature>